<keyword id="KW-0025">Alternative splicing</keyword>
<keyword id="KW-0067">ATP-binding</keyword>
<keyword id="KW-0966">Cell projection</keyword>
<keyword id="KW-0969">Cilium</keyword>
<keyword id="KW-0175">Coiled coil</keyword>
<keyword id="KW-0963">Cytoplasm</keyword>
<keyword id="KW-0206">Cytoskeleton</keyword>
<keyword id="KW-0225">Disease variant</keyword>
<keyword id="KW-0243">Dynein</keyword>
<keyword id="KW-0325">Glycoprotein</keyword>
<keyword id="KW-0493">Microtubule</keyword>
<keyword id="KW-0505">Motor protein</keyword>
<keyword id="KW-0547">Nucleotide-binding</keyword>
<keyword id="KW-1267">Proteomics identification</keyword>
<keyword id="KW-1185">Reference proteome</keyword>
<keyword id="KW-0677">Repeat</keyword>
<keyword id="KW-0802">TPR repeat</keyword>
<evidence type="ECO:0000250" key="1"/>
<evidence type="ECO:0000255" key="2"/>
<evidence type="ECO:0000256" key="3">
    <source>
        <dbReference type="SAM" id="MobiDB-lite"/>
    </source>
</evidence>
<evidence type="ECO:0000269" key="4">
    <source>
    </source>
</evidence>
<evidence type="ECO:0000269" key="5">
    <source>
    </source>
</evidence>
<evidence type="ECO:0000269" key="6">
    <source>
    </source>
</evidence>
<evidence type="ECO:0000303" key="7">
    <source>
    </source>
</evidence>
<evidence type="ECO:0000305" key="8"/>
<dbReference type="EMBL" id="AC079315">
    <property type="status" value="NOT_ANNOTATED_CDS"/>
    <property type="molecule type" value="Genomic_DNA"/>
</dbReference>
<dbReference type="EMBL" id="AC117503">
    <property type="status" value="NOT_ANNOTATED_CDS"/>
    <property type="molecule type" value="Genomic_DNA"/>
</dbReference>
<dbReference type="EMBL" id="AK095581">
    <property type="protein sequence ID" value="BAC04579.1"/>
    <property type="status" value="ALT_INIT"/>
    <property type="molecule type" value="mRNA"/>
</dbReference>
<dbReference type="EMBL" id="AK125475">
    <property type="protein sequence ID" value="BAC86173.1"/>
    <property type="molecule type" value="mRNA"/>
</dbReference>
<dbReference type="EMBL" id="AK125796">
    <property type="protein sequence ID" value="BAC86296.1"/>
    <property type="status" value="ALT_INIT"/>
    <property type="molecule type" value="mRNA"/>
</dbReference>
<dbReference type="EMBL" id="AB095937">
    <property type="protein sequence ID" value="BAC23113.2"/>
    <property type="molecule type" value="mRNA"/>
</dbReference>
<dbReference type="EMBL" id="AJ132089">
    <property type="protein sequence ID" value="CAA10562.1"/>
    <property type="molecule type" value="mRNA"/>
</dbReference>
<dbReference type="CCDS" id="CCDS9255.2">
    <molecule id="Q8IVF4-1"/>
</dbReference>
<dbReference type="RefSeq" id="NP_997320.2">
    <molecule id="Q8IVF4-1"/>
    <property type="nucleotide sequence ID" value="NM_207437.3"/>
</dbReference>
<dbReference type="SMR" id="Q8IVF4"/>
<dbReference type="BioGRID" id="128201">
    <property type="interactions" value="32"/>
</dbReference>
<dbReference type="FunCoup" id="Q8IVF4">
    <property type="interactions" value="93"/>
</dbReference>
<dbReference type="IntAct" id="Q8IVF4">
    <property type="interactions" value="12"/>
</dbReference>
<dbReference type="STRING" id="9606.ENSP00000489675"/>
<dbReference type="GlyCosmos" id="Q8IVF4">
    <property type="glycosylation" value="2 sites, 2 glycans"/>
</dbReference>
<dbReference type="GlyGen" id="Q8IVF4">
    <property type="glycosylation" value="6 sites, 1 N-linked glycan (1 site), 2 O-linked glycans (1 site)"/>
</dbReference>
<dbReference type="iPTMnet" id="Q8IVF4"/>
<dbReference type="PhosphoSitePlus" id="Q8IVF4"/>
<dbReference type="BioMuta" id="DNAH10"/>
<dbReference type="DMDM" id="296439473"/>
<dbReference type="jPOST" id="Q8IVF4"/>
<dbReference type="MassIVE" id="Q8IVF4"/>
<dbReference type="PaxDb" id="9606-ENSP00000386770"/>
<dbReference type="PeptideAtlas" id="Q8IVF4"/>
<dbReference type="ProteomicsDB" id="70691">
    <molecule id="Q8IVF4-1"/>
</dbReference>
<dbReference type="ProteomicsDB" id="70692">
    <molecule id="Q8IVF4-2"/>
</dbReference>
<dbReference type="Antibodypedia" id="52600">
    <property type="antibodies" value="13 antibodies from 7 providers"/>
</dbReference>
<dbReference type="DNASU" id="196385"/>
<dbReference type="Ensembl" id="ENST00000638045.1">
    <molecule id="Q8IVF4-1"/>
    <property type="protein sequence ID" value="ENSP00000489675.1"/>
    <property type="gene ID" value="ENSG00000197653.16"/>
</dbReference>
<dbReference type="GeneID" id="196385"/>
<dbReference type="KEGG" id="hsa:196385"/>
<dbReference type="UCSC" id="uc001uft.5">
    <molecule id="Q8IVF4-1"/>
    <property type="organism name" value="human"/>
</dbReference>
<dbReference type="AGR" id="HGNC:2941"/>
<dbReference type="CTD" id="196385"/>
<dbReference type="DisGeNET" id="196385"/>
<dbReference type="GeneCards" id="DNAH10"/>
<dbReference type="HGNC" id="HGNC:2941">
    <property type="gene designation" value="DNAH10"/>
</dbReference>
<dbReference type="HPA" id="ENSG00000197653">
    <property type="expression patterns" value="Tissue enhanced (fallopian tube, testis)"/>
</dbReference>
<dbReference type="MalaCards" id="DNAH10"/>
<dbReference type="MIM" id="605884">
    <property type="type" value="gene"/>
</dbReference>
<dbReference type="MIM" id="619515">
    <property type="type" value="phenotype"/>
</dbReference>
<dbReference type="neXtProt" id="NX_Q8IVF4"/>
<dbReference type="OpenTargets" id="ENSG00000197653"/>
<dbReference type="Orphanet" id="137893">
    <property type="disease" value="Male infertility due to large-headed multiflagellar polyploid spermatozoa"/>
</dbReference>
<dbReference type="Orphanet" id="399805">
    <property type="disease" value="Male infertility with azoospermia or oligozoospermia due to single gene mutation"/>
</dbReference>
<dbReference type="PharmGKB" id="PA27395"/>
<dbReference type="VEuPathDB" id="HostDB:ENSG00000197653"/>
<dbReference type="eggNOG" id="KOG3595">
    <property type="taxonomic scope" value="Eukaryota"/>
</dbReference>
<dbReference type="GeneTree" id="ENSGT00940000154642"/>
<dbReference type="HOGENOM" id="CLU_000038_9_1_1"/>
<dbReference type="InParanoid" id="Q8IVF4"/>
<dbReference type="OrthoDB" id="64868at2759"/>
<dbReference type="PAN-GO" id="Q8IVF4">
    <property type="GO annotations" value="5 GO annotations based on evolutionary models"/>
</dbReference>
<dbReference type="PhylomeDB" id="Q8IVF4"/>
<dbReference type="TreeFam" id="TF316836"/>
<dbReference type="PathwayCommons" id="Q8IVF4"/>
<dbReference type="SignaLink" id="Q8IVF4"/>
<dbReference type="SIGNOR" id="Q8IVF4"/>
<dbReference type="BioGRID-ORCS" id="196385">
    <property type="hits" value="26 hits in 1147 CRISPR screens"/>
</dbReference>
<dbReference type="ChiTaRS" id="DNAH10">
    <property type="organism name" value="human"/>
</dbReference>
<dbReference type="GenomeRNAi" id="196385"/>
<dbReference type="Pharos" id="Q8IVF4">
    <property type="development level" value="Tbio"/>
</dbReference>
<dbReference type="PRO" id="PR:Q8IVF4"/>
<dbReference type="Proteomes" id="UP000005640">
    <property type="component" value="Chromosome 12"/>
</dbReference>
<dbReference type="RNAct" id="Q8IVF4">
    <property type="molecule type" value="protein"/>
</dbReference>
<dbReference type="Bgee" id="ENSG00000197653">
    <property type="expression patterns" value="Expressed in right uterine tube and 99 other cell types or tissues"/>
</dbReference>
<dbReference type="ExpressionAtlas" id="Q8IVF4">
    <property type="expression patterns" value="baseline and differential"/>
</dbReference>
<dbReference type="GO" id="GO:0097729">
    <property type="term" value="C:9+2 motile cilium"/>
    <property type="evidence" value="ECO:0000318"/>
    <property type="project" value="GO_Central"/>
</dbReference>
<dbReference type="GO" id="GO:0005930">
    <property type="term" value="C:axoneme"/>
    <property type="evidence" value="ECO:0007669"/>
    <property type="project" value="UniProtKB-ARBA"/>
</dbReference>
<dbReference type="GO" id="GO:0030286">
    <property type="term" value="C:dynein complex"/>
    <property type="evidence" value="ECO:0000318"/>
    <property type="project" value="GO_Central"/>
</dbReference>
<dbReference type="GO" id="GO:0005874">
    <property type="term" value="C:microtubule"/>
    <property type="evidence" value="ECO:0007669"/>
    <property type="project" value="UniProtKB-KW"/>
</dbReference>
<dbReference type="GO" id="GO:0005524">
    <property type="term" value="F:ATP binding"/>
    <property type="evidence" value="ECO:0007669"/>
    <property type="project" value="UniProtKB-KW"/>
</dbReference>
<dbReference type="GO" id="GO:0016887">
    <property type="term" value="F:ATP hydrolysis activity"/>
    <property type="evidence" value="ECO:0007669"/>
    <property type="project" value="InterPro"/>
</dbReference>
<dbReference type="GO" id="GO:0045505">
    <property type="term" value="F:dynein intermediate chain binding"/>
    <property type="evidence" value="ECO:0000318"/>
    <property type="project" value="GO_Central"/>
</dbReference>
<dbReference type="GO" id="GO:0051959">
    <property type="term" value="F:dynein light intermediate chain binding"/>
    <property type="evidence" value="ECO:0000318"/>
    <property type="project" value="GO_Central"/>
</dbReference>
<dbReference type="GO" id="GO:0008569">
    <property type="term" value="F:minus-end-directed microtubule motor activity"/>
    <property type="evidence" value="ECO:0000318"/>
    <property type="project" value="GO_Central"/>
</dbReference>
<dbReference type="GO" id="GO:0060294">
    <property type="term" value="P:cilium movement involved in cell motility"/>
    <property type="evidence" value="ECO:0000318"/>
    <property type="project" value="GO_Central"/>
</dbReference>
<dbReference type="FunFam" id="3.40.50.300:FF:000153">
    <property type="entry name" value="Dynein axonemal heavy chain 1"/>
    <property type="match status" value="1"/>
</dbReference>
<dbReference type="FunFam" id="1.10.472.130:FF:000010">
    <property type="entry name" value="Dynein axonemal heavy chain 10"/>
    <property type="match status" value="1"/>
</dbReference>
<dbReference type="FunFam" id="1.10.8.720:FF:000005">
    <property type="entry name" value="Dynein axonemal heavy chain 10"/>
    <property type="match status" value="1"/>
</dbReference>
<dbReference type="FunFam" id="1.20.1270.280:FF:000005">
    <property type="entry name" value="Dynein axonemal heavy chain 10"/>
    <property type="match status" value="1"/>
</dbReference>
<dbReference type="FunFam" id="1.20.920.30:FF:000007">
    <property type="entry name" value="Dynein axonemal heavy chain 10"/>
    <property type="match status" value="1"/>
</dbReference>
<dbReference type="FunFam" id="3.10.490.20:FF:000006">
    <property type="entry name" value="Dynein axonemal heavy chain 10"/>
    <property type="match status" value="1"/>
</dbReference>
<dbReference type="FunFam" id="3.40.50.300:FF:001855">
    <property type="entry name" value="Dynein axonemal heavy chain 10"/>
    <property type="match status" value="1"/>
</dbReference>
<dbReference type="FunFam" id="1.10.8.1220:FF:000001">
    <property type="entry name" value="Dynein axonemal heavy chain 5"/>
    <property type="match status" value="1"/>
</dbReference>
<dbReference type="FunFam" id="3.20.180.20:FF:000001">
    <property type="entry name" value="Dynein axonemal heavy chain 5"/>
    <property type="match status" value="1"/>
</dbReference>
<dbReference type="FunFam" id="3.40.50.300:FF:002141">
    <property type="entry name" value="Dynein heavy chain"/>
    <property type="match status" value="1"/>
</dbReference>
<dbReference type="FunFam" id="1.20.140.100:FF:000013">
    <property type="entry name" value="Dynein heavy chain 10, axonemal"/>
    <property type="match status" value="1"/>
</dbReference>
<dbReference type="FunFam" id="1.20.58.1120:FF:000008">
    <property type="entry name" value="Dynein heavy chain 10, axonemal"/>
    <property type="match status" value="1"/>
</dbReference>
<dbReference type="FunFam" id="1.20.920.20:FF:000008">
    <property type="entry name" value="Dynein heavy chain 10, axonemal"/>
    <property type="match status" value="1"/>
</dbReference>
<dbReference type="FunFam" id="1.10.8.710:FF:000002">
    <property type="entry name" value="dynein heavy chain 17, axonemal"/>
    <property type="match status" value="1"/>
</dbReference>
<dbReference type="FunFam" id="1.10.287.2620:FF:000002">
    <property type="entry name" value="Dynein heavy chain 2, axonemal"/>
    <property type="match status" value="1"/>
</dbReference>
<dbReference type="FunFam" id="3.40.50.300:FF:000063">
    <property type="entry name" value="dynein heavy chain 6, axonemal"/>
    <property type="match status" value="1"/>
</dbReference>
<dbReference type="FunFam" id="3.40.50.300:FF:000049">
    <property type="entry name" value="Dynein, axonemal, heavy chain 5"/>
    <property type="match status" value="1"/>
</dbReference>
<dbReference type="Gene3D" id="1.10.287.2620">
    <property type="match status" value="1"/>
</dbReference>
<dbReference type="Gene3D" id="1.10.472.130">
    <property type="match status" value="1"/>
</dbReference>
<dbReference type="Gene3D" id="1.10.8.1220">
    <property type="match status" value="1"/>
</dbReference>
<dbReference type="Gene3D" id="1.10.8.710">
    <property type="match status" value="1"/>
</dbReference>
<dbReference type="Gene3D" id="1.20.1270.280">
    <property type="match status" value="1"/>
</dbReference>
<dbReference type="Gene3D" id="1.20.58.1120">
    <property type="match status" value="1"/>
</dbReference>
<dbReference type="Gene3D" id="1.20.920.20">
    <property type="match status" value="1"/>
</dbReference>
<dbReference type="Gene3D" id="1.20.920.30">
    <property type="match status" value="1"/>
</dbReference>
<dbReference type="Gene3D" id="3.10.490.20">
    <property type="match status" value="1"/>
</dbReference>
<dbReference type="Gene3D" id="6.10.140.1060">
    <property type="match status" value="1"/>
</dbReference>
<dbReference type="Gene3D" id="1.20.140.100">
    <property type="entry name" value="Dynein heavy chain, N-terminal domain 2"/>
    <property type="match status" value="1"/>
</dbReference>
<dbReference type="Gene3D" id="3.20.180.20">
    <property type="entry name" value="Dynein heavy chain, N-terminal domain 2"/>
    <property type="match status" value="1"/>
</dbReference>
<dbReference type="Gene3D" id="3.40.50.300">
    <property type="entry name" value="P-loop containing nucleotide triphosphate hydrolases"/>
    <property type="match status" value="5"/>
</dbReference>
<dbReference type="Gene3D" id="1.10.8.720">
    <property type="entry name" value="Region D6 of dynein motor"/>
    <property type="match status" value="1"/>
</dbReference>
<dbReference type="InterPro" id="IPR003593">
    <property type="entry name" value="AAA+_ATPase"/>
</dbReference>
<dbReference type="InterPro" id="IPR035699">
    <property type="entry name" value="AAA_6"/>
</dbReference>
<dbReference type="InterPro" id="IPR035706">
    <property type="entry name" value="AAA_9"/>
</dbReference>
<dbReference type="InterPro" id="IPR041658">
    <property type="entry name" value="AAA_lid_11"/>
</dbReference>
<dbReference type="InterPro" id="IPR042219">
    <property type="entry name" value="AAA_lid_11_sf"/>
</dbReference>
<dbReference type="InterPro" id="IPR026983">
    <property type="entry name" value="DHC"/>
</dbReference>
<dbReference type="InterPro" id="IPR041589">
    <property type="entry name" value="DNAH3_AAA_lid_1"/>
</dbReference>
<dbReference type="InterPro" id="IPR042222">
    <property type="entry name" value="Dynein_2_N"/>
</dbReference>
<dbReference type="InterPro" id="IPR043157">
    <property type="entry name" value="Dynein_AAA1S"/>
</dbReference>
<dbReference type="InterPro" id="IPR041466">
    <property type="entry name" value="Dynein_AAA5_ext"/>
</dbReference>
<dbReference type="InterPro" id="IPR041228">
    <property type="entry name" value="Dynein_C"/>
</dbReference>
<dbReference type="InterPro" id="IPR043160">
    <property type="entry name" value="Dynein_C_barrel"/>
</dbReference>
<dbReference type="InterPro" id="IPR024743">
    <property type="entry name" value="Dynein_HC_stalk"/>
</dbReference>
<dbReference type="InterPro" id="IPR024317">
    <property type="entry name" value="Dynein_heavy_chain_D4_dom"/>
</dbReference>
<dbReference type="InterPro" id="IPR004273">
    <property type="entry name" value="Dynein_heavy_D6_P-loop"/>
</dbReference>
<dbReference type="InterPro" id="IPR013602">
    <property type="entry name" value="Dynein_heavy_linker"/>
</dbReference>
<dbReference type="InterPro" id="IPR013594">
    <property type="entry name" value="Dynein_heavy_tail"/>
</dbReference>
<dbReference type="InterPro" id="IPR042228">
    <property type="entry name" value="Dynein_linker_3"/>
</dbReference>
<dbReference type="InterPro" id="IPR027417">
    <property type="entry name" value="P-loop_NTPase"/>
</dbReference>
<dbReference type="PANTHER" id="PTHR22878:SF63">
    <property type="entry name" value="DYNEIN AXONEMAL HEAVY CHAIN 10"/>
    <property type="match status" value="1"/>
</dbReference>
<dbReference type="PANTHER" id="PTHR22878">
    <property type="entry name" value="DYNEIN HEAVY CHAIN 6, AXONEMAL-LIKE-RELATED"/>
    <property type="match status" value="1"/>
</dbReference>
<dbReference type="Pfam" id="PF12774">
    <property type="entry name" value="AAA_6"/>
    <property type="match status" value="1"/>
</dbReference>
<dbReference type="Pfam" id="PF12775">
    <property type="entry name" value="AAA_7"/>
    <property type="match status" value="1"/>
</dbReference>
<dbReference type="Pfam" id="PF12780">
    <property type="entry name" value="AAA_8"/>
    <property type="match status" value="1"/>
</dbReference>
<dbReference type="Pfam" id="PF12781">
    <property type="entry name" value="AAA_9"/>
    <property type="match status" value="1"/>
</dbReference>
<dbReference type="Pfam" id="PF17857">
    <property type="entry name" value="AAA_lid_1"/>
    <property type="match status" value="1"/>
</dbReference>
<dbReference type="Pfam" id="PF18198">
    <property type="entry name" value="AAA_lid_11"/>
    <property type="match status" value="1"/>
</dbReference>
<dbReference type="Pfam" id="PF08385">
    <property type="entry name" value="DHC_N1"/>
    <property type="match status" value="2"/>
</dbReference>
<dbReference type="Pfam" id="PF08393">
    <property type="entry name" value="DHC_N2"/>
    <property type="match status" value="1"/>
</dbReference>
<dbReference type="Pfam" id="PF17852">
    <property type="entry name" value="Dynein_AAA_lid"/>
    <property type="match status" value="1"/>
</dbReference>
<dbReference type="Pfam" id="PF18199">
    <property type="entry name" value="Dynein_C"/>
    <property type="match status" value="1"/>
</dbReference>
<dbReference type="Pfam" id="PF03028">
    <property type="entry name" value="Dynein_heavy"/>
    <property type="match status" value="1"/>
</dbReference>
<dbReference type="Pfam" id="PF12777">
    <property type="entry name" value="MT"/>
    <property type="match status" value="1"/>
</dbReference>
<dbReference type="SMART" id="SM00382">
    <property type="entry name" value="AAA"/>
    <property type="match status" value="3"/>
</dbReference>
<dbReference type="SUPFAM" id="SSF52540">
    <property type="entry name" value="P-loop containing nucleoside triphosphate hydrolases"/>
    <property type="match status" value="4"/>
</dbReference>
<protein>
    <recommendedName>
        <fullName>Dynein axonemal heavy chain 10</fullName>
    </recommendedName>
    <alternativeName>
        <fullName>Axonemal beta dynein heavy chain 10</fullName>
    </alternativeName>
    <alternativeName>
        <fullName>Ciliary dynein heavy chain 10</fullName>
    </alternativeName>
</protein>
<proteinExistence type="evidence at protein level"/>
<feature type="chain" id="PRO_0000318938" description="Dynein axonemal heavy chain 10">
    <location>
        <begin position="1"/>
        <end position="4471"/>
    </location>
</feature>
<feature type="repeat" description="TPR 1">
    <location>
        <begin position="1221"/>
        <end position="1254"/>
    </location>
</feature>
<feature type="repeat" description="TPR 2">
    <location>
        <begin position="2736"/>
        <end position="2769"/>
    </location>
</feature>
<feature type="repeat" description="TPR 3">
    <location>
        <begin position="2771"/>
        <end position="2797"/>
    </location>
</feature>
<feature type="repeat" description="TPR 4">
    <location>
        <begin position="3802"/>
        <end position="3837"/>
    </location>
</feature>
<feature type="repeat" description="TPR 5">
    <location>
        <begin position="4074"/>
        <end position="4108"/>
    </location>
</feature>
<feature type="region of interest" description="Stem" evidence="1">
    <location>
        <begin position="1"/>
        <end position="1793"/>
    </location>
</feature>
<feature type="region of interest" description="Disordered" evidence="3">
    <location>
        <begin position="46"/>
        <end position="65"/>
    </location>
</feature>
<feature type="region of interest" description="AAA 1" evidence="1">
    <location>
        <begin position="1794"/>
        <end position="2015"/>
    </location>
</feature>
<feature type="region of interest" description="AAA 2" evidence="1">
    <location>
        <begin position="2075"/>
        <end position="2294"/>
    </location>
</feature>
<feature type="region of interest" description="AAA 3" evidence="1">
    <location>
        <begin position="2417"/>
        <end position="2665"/>
    </location>
</feature>
<feature type="region of interest" description="AAA 4" evidence="1">
    <location>
        <begin position="2765"/>
        <end position="3014"/>
    </location>
</feature>
<feature type="region of interest" description="Stalk" evidence="1">
    <location>
        <begin position="3029"/>
        <end position="3313"/>
    </location>
</feature>
<feature type="region of interest" description="AAA 5" evidence="1">
    <location>
        <begin position="3399"/>
        <end position="3629"/>
    </location>
</feature>
<feature type="region of interest" description="AAA 6" evidence="1">
    <location>
        <begin position="3845"/>
        <end position="4062"/>
    </location>
</feature>
<feature type="coiled-coil region" evidence="2">
    <location>
        <begin position="203"/>
        <end position="223"/>
    </location>
</feature>
<feature type="coiled-coil region" evidence="2">
    <location>
        <begin position="602"/>
        <end position="622"/>
    </location>
</feature>
<feature type="coiled-coil region" evidence="2">
    <location>
        <begin position="1071"/>
        <end position="1106"/>
    </location>
</feature>
<feature type="coiled-coil region" evidence="2">
    <location>
        <begin position="1217"/>
        <end position="1245"/>
    </location>
</feature>
<feature type="coiled-coil region" evidence="2">
    <location>
        <begin position="2747"/>
        <end position="2770"/>
    </location>
</feature>
<feature type="coiled-coil region" evidence="2">
    <location>
        <begin position="3045"/>
        <end position="3131"/>
    </location>
</feature>
<feature type="coiled-coil region" evidence="2">
    <location>
        <begin position="3257"/>
        <end position="3327"/>
    </location>
</feature>
<feature type="coiled-coil region" evidence="2">
    <location>
        <begin position="3567"/>
        <end position="3638"/>
    </location>
</feature>
<feature type="coiled-coil region" evidence="2">
    <location>
        <begin position="4235"/>
        <end position="4260"/>
    </location>
</feature>
<feature type="short sequence motif" description="GPAGTGKT motif">
    <location>
        <begin position="1832"/>
        <end position="1839"/>
    </location>
</feature>
<feature type="short sequence motif" description="CFDEFNR motif">
    <location>
        <begin position="1882"/>
        <end position="1888"/>
    </location>
</feature>
<feature type="binding site" evidence="2">
    <location>
        <begin position="1832"/>
        <end position="1839"/>
    </location>
    <ligand>
        <name>ATP</name>
        <dbReference type="ChEBI" id="CHEBI:30616"/>
    </ligand>
</feature>
<feature type="binding site" evidence="2">
    <location>
        <begin position="2113"/>
        <end position="2120"/>
    </location>
    <ligand>
        <name>ATP</name>
        <dbReference type="ChEBI" id="CHEBI:30616"/>
    </ligand>
</feature>
<feature type="binding site" evidence="2">
    <location>
        <begin position="2455"/>
        <end position="2462"/>
    </location>
    <ligand>
        <name>ATP</name>
        <dbReference type="ChEBI" id="CHEBI:30616"/>
    </ligand>
</feature>
<feature type="binding site" evidence="2">
    <location>
        <begin position="2803"/>
        <end position="2810"/>
    </location>
    <ligand>
        <name>ATP</name>
        <dbReference type="ChEBI" id="CHEBI:30616"/>
    </ligand>
</feature>
<feature type="glycosylation site" description="N-linked (GlcNAc...) asparagine" evidence="5">
    <location>
        <position position="1074"/>
    </location>
</feature>
<feature type="splice variant" id="VSP_033518" description="In isoform 2." evidence="7">
    <original>HLAKNL</original>
    <variation>VLNRCV</variation>
    <location>
        <begin position="1090"/>
        <end position="1095"/>
    </location>
</feature>
<feature type="splice variant" id="VSP_033519" description="In isoform 2." evidence="7">
    <location>
        <begin position="1096"/>
        <end position="4471"/>
    </location>
</feature>
<feature type="sequence variant" id="VAR_060135" description="In dbSNP:rs11057353.">
    <original>S</original>
    <variation>P</variation>
    <location>
        <position position="167"/>
    </location>
</feature>
<feature type="sequence variant" id="VAR_038916" description="In dbSNP:rs10846559." evidence="4">
    <original>I</original>
    <variation>V</variation>
    <location>
        <position position="480"/>
    </location>
</feature>
<feature type="sequence variant" id="VAR_060136" description="In dbSNP:rs34934281.">
    <original>T</original>
    <variation>M</variation>
    <location>
        <position position="1724"/>
    </location>
</feature>
<feature type="sequence variant" id="VAR_060137" description="In dbSNP:rs7969937.">
    <original>D</original>
    <variation>E</variation>
    <location>
        <position position="1767"/>
    </location>
</feature>
<feature type="sequence variant" id="VAR_060138" description="In dbSNP:rs35685787.">
    <original>R</original>
    <variation>K</variation>
    <location>
        <position position="1865"/>
    </location>
</feature>
<feature type="sequence variant" id="VAR_086228" description="In SPGF56; uncertain significance; dbSNP:rs369904884." evidence="6">
    <original>R</original>
    <variation>Q</variation>
    <location>
        <position position="1888"/>
    </location>
</feature>
<feature type="sequence variant" id="VAR_062177" description="In dbSNP:rs33935373.">
    <original>T</original>
    <variation>M</variation>
    <location>
        <position position="1986"/>
    </location>
</feature>
<feature type="sequence variant" id="VAR_060139" description="In dbSNP:rs7977449.">
    <original>R</original>
    <variation>W</variation>
    <location>
        <position position="2403"/>
    </location>
</feature>
<feature type="sequence variant" id="VAR_060140" description="In dbSNP:rs11835416.">
    <original>N</original>
    <variation>S</variation>
    <location>
        <position position="2483"/>
    </location>
</feature>
<feature type="sequence variant" id="VAR_086229" description="In SPGF56; uncertain significance; dbSNP:rs764317091." evidence="6">
    <original>T</original>
    <variation>M</variation>
    <location>
        <position position="2534"/>
    </location>
</feature>
<feature type="sequence variant" id="VAR_086230" description="In SPGF56; uncertain significance; dbSNP:rs755346965." evidence="6">
    <original>R</original>
    <variation>C</variation>
    <location>
        <position position="3963"/>
    </location>
</feature>
<feature type="sequence variant" id="VAR_086231" description="In SPGF56; dbSNP:rs759073156." evidence="6">
    <original>G</original>
    <variation>R</variation>
    <location>
        <position position="4280"/>
    </location>
</feature>
<feature type="sequence conflict" description="In Ref. 2; BAC86296 and 3; BAC23113." evidence="8" ref="2 3">
    <original>L</original>
    <variation>V</variation>
    <location>
        <position position="1631"/>
    </location>
</feature>
<feature type="sequence conflict" description="In Ref. 2; BAC86296." evidence="8" ref="2">
    <original>F</original>
    <variation>L</variation>
    <location>
        <position position="2046"/>
    </location>
</feature>
<feature type="sequence conflict" description="In Ref. 2; BAC86296." evidence="8" ref="2">
    <original>KLG</original>
    <variation>NLS</variation>
    <location>
        <begin position="2132"/>
        <end position="2134"/>
    </location>
</feature>
<accession>Q8IVF4</accession>
<accession>C9JMF5</accession>
<accession>O95495</accession>
<accession>Q6ZUC9</accession>
<accession>Q6ZUP6</accession>
<accession>Q8N761</accession>
<sequence>MVPEEVEVEIDEIPVLSEEGEEEEETYSQKVESVDKVRAKRVSLRTESLGQPLNREDEEMDKEISEKLPSKRTAKHIMEKMHLHMLCTPLPEEFLDQNVVFFLRNTKEAISEATDMKEAMEIMPETLEYGIINANVLHFLKNIICQVFLPALSFNQHRTSTTVGVTSGEVSNSSEHESDLPPMPGEAVEYHSIQLIRDEFLMNVQKFASNIQRTMQQLEGEIKLEMPIISVEGEVSDLAADPETVDILEQCVINWLNQISTAVEAQLKKTPQGKGPLAEIEFWRERNATLSALHEQTKLPIVRKVLDVIKESDSMLVANLQPVFTELFKFHTEASDNVRFLSTVERYFKNITHGSGFHVVLDTIPAMMSALRMVWIISRHYNKDERMIPLMERIAWEIAERVCRVVNLRTLFKENRASAQSKTLEARNTLRLWKKAYFDTRAKIEASGREDRWEFDRKRLFERTDYMATICQDLSDVLQILEEFYNIFGPELKAVTGDPKRIDDVLCRVDGLVTPMENLTFDPFSIKSSQFWKYVMDEFKIEVLIDIINKIFVQNLENPPLYKNHPPVAGAIYWERSLFFRIKHTILRFQEVQEILDSDRGQEVKQKYLEVGRTMKEYEDRKYEQWMEVTEQVLPALMKKSLLTKSSIATEEPSTLERGAVFAINFSPALREIINETKYLEQLGFTVPELARNVALQEDKFLRYTAGIQRMLDHYHMLIGTLNDAESVLLKDHSQELLRVFRSGYKRLNWNSLGIGDYITGCKQAIGKFESLVHQIHKNADDISSRLTLIEAINLFKYPAAKSEEELPGVKEFFEHIERERASDVDHMVRWYLAIGPLLTKVEGLVVHTNTGKAPKLASYYKYWEKKIYEVLTKLILKNLQSFNSLILGNVPLFHTETILTAPEIILHPNTNEIDKMCFHCVRNCVEITKHFVRWMNGSCIECPPQKGEEEEVVIINFYNDISLNPQIIEQAVMIPQNVHRILINLMKYLQKWKRYRPLWKLDKAIVMEKFAAKKPPCVAYDEKLQFYSKIAYEVMRHPLIKDEHCIRLQLRHLANTVQENAKSWVISLGKLLNESAKEELYNLHEEMEHLAKNLRKIPNTLEDLKFVLATIAEIRSKSLVMELRYRDVQERYRTMAMYNLFPPDAEKELVDKIESIWSNLFNDSVNVEHALGDIKRTFTELTRGEIMNYRVQIEEFAKRFYSEGPGSVGDDLDKGVELLGVYERELARHEKSRQELANAEKLFDLPITMYPELLKVQKEMSGLRMIYELYEGLKVAKEEWSQTLWINLNVQILQEGIEGFLRALRKLPRPVRGLSVTYYLEAKMKAFKDSIPLLLDLKNEALRDRHWKELMEKTSVFFEMTETFTLENMFAMELHKHTDVLNEIVTAAIKEVAIEKAVKEILDTWENMKFTVVKYCKGTQERGYILGSVDEIIQSLDDNTFNLQSISGSRFVGPFLQTVHKWEKTLSLIGEVIEIWMLVQRKWMYLESIFIGGDIRSQLPEEAKKFDNIDKVFKRIMGETLKDPVIKRCCEAPNRLSDLQNVSEGLEKCQKSLNDYLDSKRNAFPRFFFISDDELLSILGSSDPLCVQEHMIKMYDNIASLRFNDGDSGEKLVSAMISAEGEVMEFRKILRAEGRVEDWMTAVLNEMRRTNRLITKEAIFRYCEDRSRVDWMLLYQGMVVLAASQVWWTWEVEDVFHKAQKGEKQAMKNYGRKMHRQIDELVTRITMPLSKNDRKKYNTVLIIDVHARDIVDSFIRGSILEAREFDWESQLRFYWDREPDELNIRQCTGTFGYGYEYMGLNGRLVITPLTDRIYLTLTQALSMYLGGAPAGPAGTGKTETTKDLAKALGLLCVVTNCGEGMDYRAVGKIFSGLAQCGAWGCFDEFNRIDASVLSVISSQIQTIRNALIHQLTTFQFEGQEISLDSRMGIFITMNPGYAGRTELPESVKALFRPVVVIVPDLQQICEIMLFSEGFLEAKTLAKKMTVLYKLAREQLSKQYHYDFGLRALKSVLVMAGELKRGSSDLREDVVLMRALRDMNLPKFVFEDVPLFLGLISDLFPGLDCPRVRYPDFNDAVEQVLEENGYAVLPIQVDKVVQMFETMLTRHTTMVVGPTRGGKSVVINTLCQAQTKLGLTTKLYILNPKAVSVIELYGILDPTTRDWTDGVLSNIFREINKPTDKKERKYILFDGDVDALWVENMNSVMDDNRLLTLANGERIRLQAHCALLFEVGDLQYASPATVSRCGMVYVDPKNLKYRPYWKKWVNQIPNKVEQYNLNSLFEKYVPYLMDVIVEGIVDGRQAEKLKTIVPQTDLNMVTQLAKMLDALLEGEIEDLDLLECYFLEALYCSLGASLLEDGRMKFDEYIKRLASLSTVDTEGVWANPGELPGQLPTLYDFHFDNKRNQWVPWSKLVPEYIHAPERKFINILVHTVDTTRTTWILEQMVKIKQPVIFVGESGTSKTATTQNFLKNLSEETNIVLMVNFSSRTTSMDIQRNLEANVEKRTKDTYGPPMGKRLLVFMDDMNMPRVDEYGTQQPIALLKLLLEKGYLYDRGKELNCKSIRDLGFIAAMGKAGGGRNEVDPRFISLFSVFNVPFPSEESLHLIYSSILKGHTSTFHESIVAVSGKLTFCTLALYKNIVQDLPPTPSKFHYIFNLRDLSRVFNGLVLTNPERFQTVAQMVRVWRNECLRVFHDRLISETDKQLVQQHIGSLVVEHFKDDVEVVMRDPILFGDFQMALHEGEPRIYEDIQDYEAAKALFQEILEEYNESNTKMNLVLFDDALEHLTRVHRIIRMDRGHALLVGVGGSGKQSLSRLAAFTASCEVFEILLSRGYSENSFREDLKSLYLKLGIENKAMIFLFTDAHVAEEGFLELINNMLTSGIVPALFSEEEKESILSQIGQEALKQGMGPAKESVWQYFVNKSANNLHIVLGMSPVGDTLRTWCRNFPGMVNNTGIDWFMPWPPQALHAVAKSFLGYNPMIPAENIENVVKHVVLVHQSVDHYSQQFLQKLRRSNYVTPKNYLDFINTYSKLLDEKTQCNIAQCKRLDGGLDKLKEATIQLDELNQKLAEQKIVLAEKSAACEALLEEIAVNTAVAEEKKKLAEEKAMEIEEQNKVIAMEKAEAETTLAEVMPILEAAKLELQKLDKSDVTEIRSFAKPPKQVQTVCECILIMKGYKELNWKTAKGVMSDPNFLRSLMEIDFDSITQSQVKNIKGLLKTLNTTTEEMEAVSKAGLGMLKFVEAVMGYCDVFREIKPKREKVARLERNFYLTKRELERIQNELAAIQKELETLGAKYEAAILEKQKLQEEAEIMERRLIAADKLISGLGSENIRWLNDLDELMHRRVKLLGDCLLCAAFLSYEGAFTWEFRDEMVNRIWQNDILEREIPLSQPFRLESLLTDDVEISRWGSQGLPPDELSVQNGILTTRASRFPLCIDPQQQALNWIKRKEEKNNLRVASFNDPDFLKQLEMSIKYGTPFLFRDVDEYIDPVIDNVLEKNIKVSQGRQFIILGDKEVDYDSNFRLYLNTKLANPRYSPSVFGKAMVINYTVTLKGLEDQLLSVLVAYERRELEEQREHLIQETSENKNLLKDLEDSLLRELATSTGNMLDNVDLVHTLEETKSKATEVSEKLKLAEKTALDIDRLRDGYRPAARRGAILFFVLSEMALVNSMYQYSLIAFLEVFRLSLKKSLPDSILMKRLRNIMDTLTFSIYNHGCTGLFERHKLLFSFNMTIKIEQAEGRVPQEELDFFLKGNISLEKSKRKKPCAWLSDQGWEDIILLSEMFSDNFGQLPDDVENNQTVWQEWYDLDSLEQFPVPLGYDNNITPFQKLLILRCFRVDRVYRAVTDYVTVTMGEKYVQPPMISFEAIFEQSTPHSPIVFILSPGSDPATDLMKLAERSGFGGNRLKFLAMGQGQEKVALQLLETAVARGQWLMLQNCHLLVKWLKDLEKSLERITKPHPDFRLWLTTDPTKGFPIGILQKSLKVVTEPPNGLKLNMRATYFKISHEMLDQCPHPAFKPLVYVLAFFHAVVQERRKFGKIGWNVYYDFNESDFQVCMEILNTYLTKAFQQRDPRIPWGSLKYLIGEVMYGGRAIDSFDRRILTIYMDEYLGDFIFDTFQPFHFFRNKEVDYKIPVGDEKEKFVEAIEALPLANTPEVFGLHPNAEIGYYTQAARDMWAHLLELQPQTGESSSGISRDDYIGQVAKEIENKMPKVFDLDQVRKRLGTGLSPTSVVLLQELERFNKLVVRMTKSLAELQRALAGEVGMSNELDDVARSLFIGHIPNIWRRLAPDTLKSLGNWMVYFLRRFSQYMLWVTESEPSVMWLSGLHIPESYLTALVQATCRKNGWPLDRSTLFTQVTKFQDADEVNERAGQGCFVSGLYLEGADWDIEKGCLIKSKPKVLVVDLPILKIIPIEAHRLKLQNTFRTPVYTTSMRRNAMGVGLVFEADLFTTRHISHWVLQGVCLTLNSD</sequence>
<gene>
    <name type="primary">DNAH10</name>
    <name type="synonym">KIAA2017</name>
</gene>
<comment type="function">
    <text evidence="1 6">Force generating protein of respiratory cilia. Produces force towards the minus ends of microtubules. Dynein has ATPase activity; the force-producing power stroke is thought to occur on release of ADP. Involved in sperm motility; implicated in sperm flagellar assembly (PubMed:34237282). Probable inner arm dynein heavy chain.</text>
</comment>
<comment type="subunit">
    <text>Consists of at least two heavy chains and a number of intermediate and light chains.</text>
</comment>
<comment type="subcellular location">
    <subcellularLocation>
        <location evidence="8">Cytoplasm</location>
        <location evidence="8">Cytoskeleton</location>
        <location evidence="8">Cilium axoneme</location>
    </subcellularLocation>
</comment>
<comment type="alternative products">
    <event type="alternative splicing"/>
    <isoform>
        <id>Q8IVF4-1</id>
        <name>1</name>
        <sequence type="displayed"/>
    </isoform>
    <isoform>
        <id>Q8IVF4-2</id>
        <name>2</name>
        <sequence type="described" ref="VSP_033518 VSP_033519"/>
    </isoform>
</comment>
<comment type="tissue specificity">
    <text>Expressed primarily in trachea and testis, 2 tissues containing axonemal structures. Also expressed in brain but not in adult heart.</text>
</comment>
<comment type="domain">
    <text evidence="1">Dynein heavy chains probably consist of an N-terminal stem (which binds cargo and interacts with other dynein components), and the head or motor domain. The motor contains six tandemly-linked AAA domains in the head, which form a ring. A stalk-like structure (formed by two of the coiled coil domains) protrudes between AAA 4 and AAA 5 and terminates in a microtubule-binding site. A seventh domain may also contribute to this ring; it is not clear whether the N-terminus or the C-terminus forms this extra domain. There are four well-conserved and two non-conserved ATPase sites, one per AAA domain. Probably only one of these (within AAA 1) actually hydrolyzes ATP, the others may serve a regulatory function (By similarity).</text>
</comment>
<comment type="disease" evidence="6">
    <disease id="DI-06189">
        <name>Spermatogenic failure 56</name>
        <acronym>SPGF56</acronym>
        <description>An autosomal recessive male infertility disorder characterized by severely reduced sperm motility, due to multiple morphologic abnormalities of the flagella.</description>
        <dbReference type="MIM" id="619515"/>
    </disease>
    <text>The disease is caused by variants affecting the gene represented in this entry.</text>
</comment>
<comment type="similarity">
    <text evidence="8">Belongs to the dynein heavy chain family.</text>
</comment>
<comment type="sequence caution" evidence="8">
    <conflict type="erroneous initiation">
        <sequence resource="EMBL-CDS" id="BAC04579"/>
    </conflict>
    <text>Truncated N-terminus.</text>
</comment>
<comment type="sequence caution" evidence="8">
    <conflict type="erroneous initiation">
        <sequence resource="EMBL-CDS" id="BAC86296"/>
    </conflict>
    <text>Truncated N-terminus.</text>
</comment>
<name>DYH10_HUMAN</name>
<organism>
    <name type="scientific">Homo sapiens</name>
    <name type="common">Human</name>
    <dbReference type="NCBI Taxonomy" id="9606"/>
    <lineage>
        <taxon>Eukaryota</taxon>
        <taxon>Metazoa</taxon>
        <taxon>Chordata</taxon>
        <taxon>Craniata</taxon>
        <taxon>Vertebrata</taxon>
        <taxon>Euteleostomi</taxon>
        <taxon>Mammalia</taxon>
        <taxon>Eutheria</taxon>
        <taxon>Euarchontoglires</taxon>
        <taxon>Primates</taxon>
        <taxon>Haplorrhini</taxon>
        <taxon>Catarrhini</taxon>
        <taxon>Hominidae</taxon>
        <taxon>Homo</taxon>
    </lineage>
</organism>
<reference key="1">
    <citation type="journal article" date="2006" name="Nature">
        <title>The finished DNA sequence of human chromosome 12.</title>
        <authorList>
            <person name="Scherer S.E."/>
            <person name="Muzny D.M."/>
            <person name="Buhay C.J."/>
            <person name="Chen R."/>
            <person name="Cree A."/>
            <person name="Ding Y."/>
            <person name="Dugan-Rocha S."/>
            <person name="Gill R."/>
            <person name="Gunaratne P."/>
            <person name="Harris R.A."/>
            <person name="Hawes A.C."/>
            <person name="Hernandez J."/>
            <person name="Hodgson A.V."/>
            <person name="Hume J."/>
            <person name="Jackson A."/>
            <person name="Khan Z.M."/>
            <person name="Kovar-Smith C."/>
            <person name="Lewis L.R."/>
            <person name="Lozado R.J."/>
            <person name="Metzker M.L."/>
            <person name="Milosavljevic A."/>
            <person name="Miner G.R."/>
            <person name="Montgomery K.T."/>
            <person name="Morgan M.B."/>
            <person name="Nazareth L.V."/>
            <person name="Scott G."/>
            <person name="Sodergren E."/>
            <person name="Song X.-Z."/>
            <person name="Steffen D."/>
            <person name="Lovering R.C."/>
            <person name="Wheeler D.A."/>
            <person name="Worley K.C."/>
            <person name="Yuan Y."/>
            <person name="Zhang Z."/>
            <person name="Adams C.Q."/>
            <person name="Ansari-Lari M.A."/>
            <person name="Ayele M."/>
            <person name="Brown M.J."/>
            <person name="Chen G."/>
            <person name="Chen Z."/>
            <person name="Clerc-Blankenburg K.P."/>
            <person name="Davis C."/>
            <person name="Delgado O."/>
            <person name="Dinh H.H."/>
            <person name="Draper H."/>
            <person name="Gonzalez-Garay M.L."/>
            <person name="Havlak P."/>
            <person name="Jackson L.R."/>
            <person name="Jacob L.S."/>
            <person name="Kelly S.H."/>
            <person name="Li L."/>
            <person name="Li Z."/>
            <person name="Liu J."/>
            <person name="Liu W."/>
            <person name="Lu J."/>
            <person name="Maheshwari M."/>
            <person name="Nguyen B.-V."/>
            <person name="Okwuonu G.O."/>
            <person name="Pasternak S."/>
            <person name="Perez L.M."/>
            <person name="Plopper F.J.H."/>
            <person name="Santibanez J."/>
            <person name="Shen H."/>
            <person name="Tabor P.E."/>
            <person name="Verduzco D."/>
            <person name="Waldron L."/>
            <person name="Wang Q."/>
            <person name="Williams G.A."/>
            <person name="Zhang J."/>
            <person name="Zhou J."/>
            <person name="Allen C.C."/>
            <person name="Amin A.G."/>
            <person name="Anyalebechi V."/>
            <person name="Bailey M."/>
            <person name="Barbaria J.A."/>
            <person name="Bimage K.E."/>
            <person name="Bryant N.P."/>
            <person name="Burch P.E."/>
            <person name="Burkett C.E."/>
            <person name="Burrell K.L."/>
            <person name="Calderon E."/>
            <person name="Cardenas V."/>
            <person name="Carter K."/>
            <person name="Casias K."/>
            <person name="Cavazos I."/>
            <person name="Cavazos S.R."/>
            <person name="Ceasar H."/>
            <person name="Chacko J."/>
            <person name="Chan S.N."/>
            <person name="Chavez D."/>
            <person name="Christopoulos C."/>
            <person name="Chu J."/>
            <person name="Cockrell R."/>
            <person name="Cox C.D."/>
            <person name="Dang M."/>
            <person name="Dathorne S.R."/>
            <person name="David R."/>
            <person name="Davis C.M."/>
            <person name="Davy-Carroll L."/>
            <person name="Deshazo D.R."/>
            <person name="Donlin J.E."/>
            <person name="D'Souza L."/>
            <person name="Eaves K.A."/>
            <person name="Egan A."/>
            <person name="Emery-Cohen A.J."/>
            <person name="Escotto M."/>
            <person name="Flagg N."/>
            <person name="Forbes L.D."/>
            <person name="Gabisi A.M."/>
            <person name="Garza M."/>
            <person name="Hamilton C."/>
            <person name="Henderson N."/>
            <person name="Hernandez O."/>
            <person name="Hines S."/>
            <person name="Hogues M.E."/>
            <person name="Huang M."/>
            <person name="Idlebird D.G."/>
            <person name="Johnson R."/>
            <person name="Jolivet A."/>
            <person name="Jones S."/>
            <person name="Kagan R."/>
            <person name="King L.M."/>
            <person name="Leal B."/>
            <person name="Lebow H."/>
            <person name="Lee S."/>
            <person name="LeVan J.M."/>
            <person name="Lewis L.C."/>
            <person name="London P."/>
            <person name="Lorensuhewa L.M."/>
            <person name="Loulseged H."/>
            <person name="Lovett D.A."/>
            <person name="Lucier A."/>
            <person name="Lucier R.L."/>
            <person name="Ma J."/>
            <person name="Madu R.C."/>
            <person name="Mapua P."/>
            <person name="Martindale A.D."/>
            <person name="Martinez E."/>
            <person name="Massey E."/>
            <person name="Mawhiney S."/>
            <person name="Meador M.G."/>
            <person name="Mendez S."/>
            <person name="Mercado C."/>
            <person name="Mercado I.C."/>
            <person name="Merritt C.E."/>
            <person name="Miner Z.L."/>
            <person name="Minja E."/>
            <person name="Mitchell T."/>
            <person name="Mohabbat F."/>
            <person name="Mohabbat K."/>
            <person name="Montgomery B."/>
            <person name="Moore N."/>
            <person name="Morris S."/>
            <person name="Munidasa M."/>
            <person name="Ngo R.N."/>
            <person name="Nguyen N.B."/>
            <person name="Nickerson E."/>
            <person name="Nwaokelemeh O.O."/>
            <person name="Nwokenkwo S."/>
            <person name="Obregon M."/>
            <person name="Oguh M."/>
            <person name="Oragunye N."/>
            <person name="Oviedo R.J."/>
            <person name="Parish B.J."/>
            <person name="Parker D.N."/>
            <person name="Parrish J."/>
            <person name="Parks K.L."/>
            <person name="Paul H.A."/>
            <person name="Payton B.A."/>
            <person name="Perez A."/>
            <person name="Perrin W."/>
            <person name="Pickens A."/>
            <person name="Primus E.L."/>
            <person name="Pu L.-L."/>
            <person name="Puazo M."/>
            <person name="Quiles M.M."/>
            <person name="Quiroz J.B."/>
            <person name="Rabata D."/>
            <person name="Reeves K."/>
            <person name="Ruiz S.J."/>
            <person name="Shao H."/>
            <person name="Sisson I."/>
            <person name="Sonaike T."/>
            <person name="Sorelle R.P."/>
            <person name="Sutton A.E."/>
            <person name="Svatek A.F."/>
            <person name="Svetz L.A."/>
            <person name="Tamerisa K.S."/>
            <person name="Taylor T.R."/>
            <person name="Teague B."/>
            <person name="Thomas N."/>
            <person name="Thorn R.D."/>
            <person name="Trejos Z.Y."/>
            <person name="Trevino B.K."/>
            <person name="Ukegbu O.N."/>
            <person name="Urban J.B."/>
            <person name="Vasquez L.I."/>
            <person name="Vera V.A."/>
            <person name="Villasana D.M."/>
            <person name="Wang L."/>
            <person name="Ward-Moore S."/>
            <person name="Warren J.T."/>
            <person name="Wei X."/>
            <person name="White F."/>
            <person name="Williamson A.L."/>
            <person name="Wleczyk R."/>
            <person name="Wooden H.S."/>
            <person name="Wooden S.H."/>
            <person name="Yen J."/>
            <person name="Yoon L."/>
            <person name="Yoon V."/>
            <person name="Zorrilla S.E."/>
            <person name="Nelson D."/>
            <person name="Kucherlapati R."/>
            <person name="Weinstock G."/>
            <person name="Gibbs R.A."/>
        </authorList>
    </citation>
    <scope>NUCLEOTIDE SEQUENCE [LARGE SCALE GENOMIC DNA]</scope>
</reference>
<reference key="2">
    <citation type="journal article" date="2004" name="Nat. Genet.">
        <title>Complete sequencing and characterization of 21,243 full-length human cDNAs.</title>
        <authorList>
            <person name="Ota T."/>
            <person name="Suzuki Y."/>
            <person name="Nishikawa T."/>
            <person name="Otsuki T."/>
            <person name="Sugiyama T."/>
            <person name="Irie R."/>
            <person name="Wakamatsu A."/>
            <person name="Hayashi K."/>
            <person name="Sato H."/>
            <person name="Nagai K."/>
            <person name="Kimura K."/>
            <person name="Makita H."/>
            <person name="Sekine M."/>
            <person name="Obayashi M."/>
            <person name="Nishi T."/>
            <person name="Shibahara T."/>
            <person name="Tanaka T."/>
            <person name="Ishii S."/>
            <person name="Yamamoto J."/>
            <person name="Saito K."/>
            <person name="Kawai Y."/>
            <person name="Isono Y."/>
            <person name="Nakamura Y."/>
            <person name="Nagahari K."/>
            <person name="Murakami K."/>
            <person name="Yasuda T."/>
            <person name="Iwayanagi T."/>
            <person name="Wagatsuma M."/>
            <person name="Shiratori A."/>
            <person name="Sudo H."/>
            <person name="Hosoiri T."/>
            <person name="Kaku Y."/>
            <person name="Kodaira H."/>
            <person name="Kondo H."/>
            <person name="Sugawara M."/>
            <person name="Takahashi M."/>
            <person name="Kanda K."/>
            <person name="Yokoi T."/>
            <person name="Furuya T."/>
            <person name="Kikkawa E."/>
            <person name="Omura Y."/>
            <person name="Abe K."/>
            <person name="Kamihara K."/>
            <person name="Katsuta N."/>
            <person name="Sato K."/>
            <person name="Tanikawa M."/>
            <person name="Yamazaki M."/>
            <person name="Ninomiya K."/>
            <person name="Ishibashi T."/>
            <person name="Yamashita H."/>
            <person name="Murakawa K."/>
            <person name="Fujimori K."/>
            <person name="Tanai H."/>
            <person name="Kimata M."/>
            <person name="Watanabe M."/>
            <person name="Hiraoka S."/>
            <person name="Chiba Y."/>
            <person name="Ishida S."/>
            <person name="Ono Y."/>
            <person name="Takiguchi S."/>
            <person name="Watanabe S."/>
            <person name="Yosida M."/>
            <person name="Hotuta T."/>
            <person name="Kusano J."/>
            <person name="Kanehori K."/>
            <person name="Takahashi-Fujii A."/>
            <person name="Hara H."/>
            <person name="Tanase T.-O."/>
            <person name="Nomura Y."/>
            <person name="Togiya S."/>
            <person name="Komai F."/>
            <person name="Hara R."/>
            <person name="Takeuchi K."/>
            <person name="Arita M."/>
            <person name="Imose N."/>
            <person name="Musashino K."/>
            <person name="Yuuki H."/>
            <person name="Oshima A."/>
            <person name="Sasaki N."/>
            <person name="Aotsuka S."/>
            <person name="Yoshikawa Y."/>
            <person name="Matsunawa H."/>
            <person name="Ichihara T."/>
            <person name="Shiohata N."/>
            <person name="Sano S."/>
            <person name="Moriya S."/>
            <person name="Momiyama H."/>
            <person name="Satoh N."/>
            <person name="Takami S."/>
            <person name="Terashima Y."/>
            <person name="Suzuki O."/>
            <person name="Nakagawa S."/>
            <person name="Senoh A."/>
            <person name="Mizoguchi H."/>
            <person name="Goto Y."/>
            <person name="Shimizu F."/>
            <person name="Wakebe H."/>
            <person name="Hishigaki H."/>
            <person name="Watanabe T."/>
            <person name="Sugiyama A."/>
            <person name="Takemoto M."/>
            <person name="Kawakami B."/>
            <person name="Yamazaki M."/>
            <person name="Watanabe K."/>
            <person name="Kumagai A."/>
            <person name="Itakura S."/>
            <person name="Fukuzumi Y."/>
            <person name="Fujimori Y."/>
            <person name="Komiyama M."/>
            <person name="Tashiro H."/>
            <person name="Tanigami A."/>
            <person name="Fujiwara T."/>
            <person name="Ono T."/>
            <person name="Yamada K."/>
            <person name="Fujii Y."/>
            <person name="Ozaki K."/>
            <person name="Hirao M."/>
            <person name="Ohmori Y."/>
            <person name="Kawabata A."/>
            <person name="Hikiji T."/>
            <person name="Kobatake N."/>
            <person name="Inagaki H."/>
            <person name="Ikema Y."/>
            <person name="Okamoto S."/>
            <person name="Okitani R."/>
            <person name="Kawakami T."/>
            <person name="Noguchi S."/>
            <person name="Itoh T."/>
            <person name="Shigeta K."/>
            <person name="Senba T."/>
            <person name="Matsumura K."/>
            <person name="Nakajima Y."/>
            <person name="Mizuno T."/>
            <person name="Morinaga M."/>
            <person name="Sasaki M."/>
            <person name="Togashi T."/>
            <person name="Oyama M."/>
            <person name="Hata H."/>
            <person name="Watanabe M."/>
            <person name="Komatsu T."/>
            <person name="Mizushima-Sugano J."/>
            <person name="Satoh T."/>
            <person name="Shirai Y."/>
            <person name="Takahashi Y."/>
            <person name="Nakagawa K."/>
            <person name="Okumura K."/>
            <person name="Nagase T."/>
            <person name="Nomura N."/>
            <person name="Kikuchi H."/>
            <person name="Masuho Y."/>
            <person name="Yamashita R."/>
            <person name="Nakai K."/>
            <person name="Yada T."/>
            <person name="Nakamura Y."/>
            <person name="Ohara O."/>
            <person name="Isogai T."/>
            <person name="Sugano S."/>
        </authorList>
    </citation>
    <scope>NUCLEOTIDE SEQUENCE [LARGE SCALE MRNA] OF 155-4471 (ISOFORM 2)</scope>
    <scope>NUCLEOTIDE SEQUENCE [LARGE SCALE MRNA] OF 1487-2134 AND 2926-3760 (ISOFORM 1)</scope>
    <scope>VARIANT VAL-480</scope>
    <source>
        <tissue>Brain</tissue>
        <tissue>Testis</tissue>
    </source>
</reference>
<reference key="3">
    <citation type="submission" date="2002-11" db="EMBL/GenBank/DDBJ databases">
        <title>The nucleotide sequence of a long cDNA clone isolated from human.</title>
        <authorList>
            <person name="Nagase T."/>
            <person name="Kikuno R."/>
            <person name="Ohara O."/>
        </authorList>
    </citation>
    <scope>NUCLEOTIDE SEQUENCE [LARGE SCALE MRNA] OF 1421-4471 (ISOFORM 1)</scope>
    <source>
        <tissue>Brain</tissue>
    </source>
</reference>
<reference key="4">
    <citation type="journal article" date="2000" name="Eur. J. Hum. Genet.">
        <title>Identification, tissue specific expression, and chromosomal localisation of several human dynein heavy chain genes.</title>
        <authorList>
            <person name="Maiti A.K."/>
            <person name="Mattei M.-G."/>
            <person name="Jorissen M."/>
            <person name="Volz A."/>
            <person name="Zeigler A."/>
            <person name="Bouvagnet P."/>
        </authorList>
    </citation>
    <scope>NUCLEOTIDE SEQUENCE [MRNA] OF 1836-1936 (ISOFORM 1)</scope>
    <source>
        <tissue>Nasal polyp</tissue>
    </source>
</reference>
<reference key="5">
    <citation type="journal article" date="2009" name="J. Proteome Res.">
        <title>Glycoproteomics analysis of human liver tissue by combination of multiple enzyme digestion and hydrazide chemistry.</title>
        <authorList>
            <person name="Chen R."/>
            <person name="Jiang X."/>
            <person name="Sun D."/>
            <person name="Han G."/>
            <person name="Wang F."/>
            <person name="Ye M."/>
            <person name="Wang L."/>
            <person name="Zou H."/>
        </authorList>
    </citation>
    <scope>GLYCOSYLATION [LARGE SCALE ANALYSIS] AT ASN-1074</scope>
    <source>
        <tissue>Liver</tissue>
    </source>
</reference>
<reference key="6">
    <citation type="journal article" date="2021" name="Am. J. Hum. Genet.">
        <title>Bi-allelic mutations of DNAH10 cause primary male infertility with asthenoteratozoospermia in humans and mice.</title>
        <authorList>
            <person name="Tu C."/>
            <person name="Cong J."/>
            <person name="Zhang Q."/>
            <person name="He X."/>
            <person name="Zheng R."/>
            <person name="Yang X."/>
            <person name="Gao Y."/>
            <person name="Wu H."/>
            <person name="Lv M."/>
            <person name="Gu Y."/>
            <person name="Lu S."/>
            <person name="Liu C."/>
            <person name="Tian S."/>
            <person name="Meng L."/>
            <person name="Wang W."/>
            <person name="Tan C."/>
            <person name="Nie H."/>
            <person name="Li D."/>
            <person name="Zhang H."/>
            <person name="Gong F."/>
            <person name="Hu L."/>
            <person name="Lu G."/>
            <person name="Xu W."/>
            <person name="Lin G."/>
            <person name="Zhang F."/>
            <person name="Cao Y."/>
            <person name="Tan Y.Q."/>
        </authorList>
    </citation>
    <scope>INVOLVEMENT IN SPGF56</scope>
    <scope>FUNCTION</scope>
    <scope>VARIANTS SPGF56 GLN-1888; MET-2534; CYS-3963 AND ARG-4280</scope>
</reference>